<evidence type="ECO:0000250" key="1">
    <source>
        <dbReference type="UniProtKB" id="O87237"/>
    </source>
</evidence>
<evidence type="ECO:0000256" key="2">
    <source>
        <dbReference type="SAM" id="MobiDB-lite"/>
    </source>
</evidence>
<evidence type="ECO:0000269" key="3">
    <source>
    </source>
</evidence>
<evidence type="ECO:0000303" key="4">
    <source>
    </source>
</evidence>
<evidence type="ECO:0000305" key="5"/>
<evidence type="ECO:0007829" key="6">
    <source>
        <dbReference type="PDB" id="2KTO"/>
    </source>
</evidence>
<feature type="propeptide" id="PRO_0000399044" evidence="3">
    <location>
        <begin position="1"/>
        <end position="40"/>
    </location>
</feature>
<feature type="peptide" id="PRO_0000399045" description="Lantibiotic lichenicidin VK21 A2" evidence="3">
    <location>
        <begin position="41"/>
        <end position="72"/>
    </location>
</feature>
<feature type="region of interest" description="Disordered" evidence="2">
    <location>
        <begin position="1"/>
        <end position="21"/>
    </location>
</feature>
<feature type="modified residue" description="2-oxobutanoic acid" evidence="3">
    <location>
        <position position="41"/>
    </location>
</feature>
<feature type="modified residue" description="(Z)-2,3-didehydrobutyrine" evidence="3">
    <location>
        <position position="42"/>
    </location>
</feature>
<feature type="modified residue" description="(Z)-2,3-didehydrobutyrine" evidence="3">
    <location>
        <position position="45"/>
    </location>
</feature>
<feature type="modified residue" description="(Z)-2,3-didehydrobutyrine" evidence="3">
    <location>
        <position position="46"/>
    </location>
</feature>
<feature type="modified residue" description="2,3-didehydroalanine (Ser)" evidence="3">
    <location>
        <position position="48"/>
    </location>
</feature>
<feature type="modified residue" description="(Z)-2,3-didehydrobutyrine" evidence="3">
    <location>
        <position position="53"/>
    </location>
</feature>
<feature type="modified residue" description="(Z)-2,3-didehydrobutyrine" evidence="3">
    <location>
        <position position="57"/>
    </location>
</feature>
<feature type="modified residue" description="(Z)-2,3-didehydrobutyrine" evidence="3">
    <location>
        <position position="66"/>
    </location>
</feature>
<feature type="cross-link" description="Lanthionine (Ser-Cys)" evidence="3">
    <location>
        <begin position="47"/>
        <end position="51"/>
    </location>
</feature>
<feature type="cross-link" description="Lanthionine (Ser-Cys)" evidence="3">
    <location>
        <begin position="59"/>
        <end position="63"/>
    </location>
</feature>
<feature type="cross-link" description="Beta-methyllanthionine (Thr-Cys)" evidence="3">
    <location>
        <begin position="65"/>
        <end position="68"/>
    </location>
</feature>
<feature type="cross-link" description="Beta-methyllanthionine (Thr-Cys)" evidence="3">
    <location>
        <begin position="69"/>
        <end position="72"/>
    </location>
</feature>
<feature type="helix" evidence="6">
    <location>
        <begin position="59"/>
        <end position="62"/>
    </location>
</feature>
<organism>
    <name type="scientific">Bacillus licheniformis</name>
    <dbReference type="NCBI Taxonomy" id="1402"/>
    <lineage>
        <taxon>Bacteria</taxon>
        <taxon>Bacillati</taxon>
        <taxon>Bacillota</taxon>
        <taxon>Bacilli</taxon>
        <taxon>Bacillales</taxon>
        <taxon>Bacillaceae</taxon>
        <taxon>Bacillus</taxon>
    </lineage>
</organism>
<name>LANLB_BACLI</name>
<dbReference type="EMBL" id="GU949560">
    <property type="protein sequence ID" value="ADM36017.1"/>
    <property type="molecule type" value="Genomic_DNA"/>
</dbReference>
<dbReference type="RefSeq" id="WP_003186379.1">
    <property type="nucleotide sequence ID" value="NZ_BEXU01000002.1"/>
</dbReference>
<dbReference type="PDB" id="2KTO">
    <property type="method" value="NMR"/>
    <property type="chains" value="A=42-72"/>
</dbReference>
<dbReference type="PDBsum" id="2KTO"/>
<dbReference type="SMR" id="P86476"/>
<dbReference type="GeneID" id="92859302"/>
<dbReference type="PATRIC" id="fig|1402.63.peg.4090"/>
<dbReference type="EvolutionaryTrace" id="P86476"/>
<dbReference type="GO" id="GO:0005615">
    <property type="term" value="C:extracellular space"/>
    <property type="evidence" value="ECO:0000314"/>
    <property type="project" value="UniProtKB"/>
</dbReference>
<dbReference type="GO" id="GO:0005102">
    <property type="term" value="F:signaling receptor binding"/>
    <property type="evidence" value="ECO:0007669"/>
    <property type="project" value="UniProtKB-KW"/>
</dbReference>
<dbReference type="GO" id="GO:0050830">
    <property type="term" value="P:defense response to Gram-positive bacterium"/>
    <property type="evidence" value="ECO:0000314"/>
    <property type="project" value="UniProtKB"/>
</dbReference>
<dbReference type="GO" id="GO:0031640">
    <property type="term" value="P:killing of cells of another organism"/>
    <property type="evidence" value="ECO:0007669"/>
    <property type="project" value="UniProtKB-KW"/>
</dbReference>
<dbReference type="InterPro" id="IPR027632">
    <property type="entry name" value="Lant_2_A2"/>
</dbReference>
<dbReference type="NCBIfam" id="NF038161">
    <property type="entry name" value="lant_II_LchA2"/>
    <property type="match status" value="1"/>
</dbReference>
<dbReference type="NCBIfam" id="TIGR03893">
    <property type="entry name" value="lant_SP_1948"/>
    <property type="match status" value="1"/>
</dbReference>
<dbReference type="Pfam" id="PF16934">
    <property type="entry name" value="Mersacidin"/>
    <property type="match status" value="1"/>
</dbReference>
<accession>P86476</accession>
<accession>E0YCK0</accession>
<comment type="function">
    <text evidence="3">Lanthionine-containing peptide antibiotic (lantibiotic) active on Gram-positive bacteria. The bactericidal activity of lantibiotics is based on depolarization of energized bacterial cytoplasmic membranes, initiated by the formation of aqueous transmembrane pores. When present individually, LchA2 exhibits activity towards B.subtilis L1 (IC(50)=30 uM), Rhodococcus sp. SS2 (IC(50)=16.6 uM), M.luteus B1314 (IC(50)=2.6 uM), B.megaterium VKM41 (IC(50)=2 uM), S.aureus 209p (IC(50)=20 uM), B.pumilus 2001, B.globigii I, B.amyloliquefaciens I, M.smegmatis 1171 and M.phlei 1291. However, when combined with LchA1, it displays much stronger activity against B.subtilis L1 (IC(50)=0.64 uM), Rhodococcus sp. SS2 (IC(50)=0.64 uM), M.luteus B1314 (IC(50)=0.09 uM), B.megaterium VKM41 (IC(50)=0.12 uM) and S.aureus 209p (IC(50)=0.64 uM). The activity of the combined LchA1 and LchA2 peptides is strongest at a molar ratio of 1. Even when applied at 17-fold concentration of the highest IC(50) values for Gram-positive bacteria, neither the individual nor the combined peptides display activity against Gram-negative bacteria P.aeruginosa PAO1, P.putida I-97 or E.coli C600.</text>
</comment>
<comment type="subcellular location">
    <subcellularLocation>
        <location evidence="3 5">Secreted</location>
    </subcellularLocation>
</comment>
<comment type="PTM">
    <text evidence="1 3">Maturation of lantibiotics involves the enzymatic conversion of Thr, and Ser into dehydrated AA and the formation of thioether bonds with cysteine. This is followed by membrane translocation and cleavage of the modified precursor.</text>
</comment>
<comment type="PTM">
    <text evidence="3">The 2,3-didehydrobutyrines are determined to be the Z-isomers.</text>
</comment>
<comment type="mass spectrometry" mass="3019.36" method="Electrospray" evidence="3"/>
<protein>
    <recommendedName>
        <fullName evidence="4">Lantibiotic lichenicidin VK21 A2</fullName>
        <shortName evidence="4">LchA2</shortName>
    </recommendedName>
</protein>
<proteinExistence type="evidence at protein level"/>
<gene>
    <name evidence="4" type="primary">lchA2</name>
</gene>
<keyword id="KW-0002">3D-structure</keyword>
<keyword id="KW-0044">Antibiotic</keyword>
<keyword id="KW-0929">Antimicrobial</keyword>
<keyword id="KW-0078">Bacteriocin</keyword>
<keyword id="KW-0903">Direct protein sequencing</keyword>
<keyword id="KW-0425">Lantibiotic</keyword>
<keyword id="KW-0964">Secreted</keyword>
<keyword id="KW-0883">Thioether bond</keyword>
<sequence length="72" mass="7448">MKTMKNSAAREAFKGANHPAGMVSEEELKALVGGNDVNPETTPATTSSWTCITAGVTVSASLCPTTKCTSRC</sequence>
<reference evidence="5" key="1">
    <citation type="journal article" date="2010" name="Biochemistry">
        <title>Isolation, structure elucidation, and synergistic antibacterial activity of a novel two-component lantibiotic Lichenicidin from Bacillus licheniformis VK21.</title>
        <authorList>
            <person name="Shenkarev Z.O."/>
            <person name="Finkina E.I."/>
            <person name="Nurmukhamedova E.K."/>
            <person name="Balandin S.V."/>
            <person name="Mineev K.S."/>
            <person name="Nadezhdin K.D."/>
            <person name="Yakimenko Z.A."/>
            <person name="Tagaev A.A."/>
            <person name="Temirov Y.V."/>
            <person name="Arseniev A.S."/>
            <person name="Ovchinnikova T.V."/>
        </authorList>
    </citation>
    <scope>NUCLEOTIDE SEQUENCE [GENOMIC DNA]</scope>
    <scope>PROTEIN SEQUENCE OF 41-72</scope>
    <scope>FUNCTION</scope>
    <scope>MASS SPECTROMETRY</scope>
    <scope>STRUCTURE BY NMR OF 41-72</scope>
    <scope>OXOBUTANOIC ACID FORMATION AT THR-41</scope>
    <scope>DEHYDRATION AT THR-42; THR-45; THR-46; SER-48; THR-53; THR-57 AND THR-66</scope>
    <scope>LANTHIONINE CROSS-LINKS</scope>
    <source>
        <strain evidence="3">VK21</strain>
    </source>
</reference>